<organism evidence="13">
    <name type="scientific">Drosophila melanogaster</name>
    <name type="common">Fruit fly</name>
    <dbReference type="NCBI Taxonomy" id="7227"/>
    <lineage>
        <taxon>Eukaryota</taxon>
        <taxon>Metazoa</taxon>
        <taxon>Ecdysozoa</taxon>
        <taxon>Arthropoda</taxon>
        <taxon>Hexapoda</taxon>
        <taxon>Insecta</taxon>
        <taxon>Pterygota</taxon>
        <taxon>Neoptera</taxon>
        <taxon>Endopterygota</taxon>
        <taxon>Diptera</taxon>
        <taxon>Brachycera</taxon>
        <taxon>Muscomorpha</taxon>
        <taxon>Ephydroidea</taxon>
        <taxon>Drosophilidae</taxon>
        <taxon>Drosophila</taxon>
        <taxon>Sophophora</taxon>
    </lineage>
</organism>
<reference key="1">
    <citation type="journal article" date="2000" name="Genetics">
        <title>The Drosophila cystoblast differentiation factor, benign gonial cell neoplasm, is related to DExH-box proteins and interacts genetically with bag-of-marbles.</title>
        <authorList>
            <person name="Ohlstein B."/>
            <person name="Lavoie C.A."/>
            <person name="Vef O."/>
            <person name="Gateff E."/>
            <person name="McKearin D.M."/>
        </authorList>
    </citation>
    <scope>NUCLEOTIDE SEQUENCE [MRNA]</scope>
    <scope>TISSUE SPECIFICITY</scope>
    <source>
        <tissue>Testis</tissue>
    </source>
</reference>
<reference key="2">
    <citation type="journal article" date="2000" name="Science">
        <title>The genome sequence of Drosophila melanogaster.</title>
        <authorList>
            <person name="Adams M.D."/>
            <person name="Celniker S.E."/>
            <person name="Holt R.A."/>
            <person name="Evans C.A."/>
            <person name="Gocayne J.D."/>
            <person name="Amanatides P.G."/>
            <person name="Scherer S.E."/>
            <person name="Li P.W."/>
            <person name="Hoskins R.A."/>
            <person name="Galle R.F."/>
            <person name="George R.A."/>
            <person name="Lewis S.E."/>
            <person name="Richards S."/>
            <person name="Ashburner M."/>
            <person name="Henderson S.N."/>
            <person name="Sutton G.G."/>
            <person name="Wortman J.R."/>
            <person name="Yandell M.D."/>
            <person name="Zhang Q."/>
            <person name="Chen L.X."/>
            <person name="Brandon R.C."/>
            <person name="Rogers Y.-H.C."/>
            <person name="Blazej R.G."/>
            <person name="Champe M."/>
            <person name="Pfeiffer B.D."/>
            <person name="Wan K.H."/>
            <person name="Doyle C."/>
            <person name="Baxter E.G."/>
            <person name="Helt G."/>
            <person name="Nelson C.R."/>
            <person name="Miklos G.L.G."/>
            <person name="Abril J.F."/>
            <person name="Agbayani A."/>
            <person name="An H.-J."/>
            <person name="Andrews-Pfannkoch C."/>
            <person name="Baldwin D."/>
            <person name="Ballew R.M."/>
            <person name="Basu A."/>
            <person name="Baxendale J."/>
            <person name="Bayraktaroglu L."/>
            <person name="Beasley E.M."/>
            <person name="Beeson K.Y."/>
            <person name="Benos P.V."/>
            <person name="Berman B.P."/>
            <person name="Bhandari D."/>
            <person name="Bolshakov S."/>
            <person name="Borkova D."/>
            <person name="Botchan M.R."/>
            <person name="Bouck J."/>
            <person name="Brokstein P."/>
            <person name="Brottier P."/>
            <person name="Burtis K.C."/>
            <person name="Busam D.A."/>
            <person name="Butler H."/>
            <person name="Cadieu E."/>
            <person name="Center A."/>
            <person name="Chandra I."/>
            <person name="Cherry J.M."/>
            <person name="Cawley S."/>
            <person name="Dahlke C."/>
            <person name="Davenport L.B."/>
            <person name="Davies P."/>
            <person name="de Pablos B."/>
            <person name="Delcher A."/>
            <person name="Deng Z."/>
            <person name="Mays A.D."/>
            <person name="Dew I."/>
            <person name="Dietz S.M."/>
            <person name="Dodson K."/>
            <person name="Doup L.E."/>
            <person name="Downes M."/>
            <person name="Dugan-Rocha S."/>
            <person name="Dunkov B.C."/>
            <person name="Dunn P."/>
            <person name="Durbin K.J."/>
            <person name="Evangelista C.C."/>
            <person name="Ferraz C."/>
            <person name="Ferriera S."/>
            <person name="Fleischmann W."/>
            <person name="Fosler C."/>
            <person name="Gabrielian A.E."/>
            <person name="Garg N.S."/>
            <person name="Gelbart W.M."/>
            <person name="Glasser K."/>
            <person name="Glodek A."/>
            <person name="Gong F."/>
            <person name="Gorrell J.H."/>
            <person name="Gu Z."/>
            <person name="Guan P."/>
            <person name="Harris M."/>
            <person name="Harris N.L."/>
            <person name="Harvey D.A."/>
            <person name="Heiman T.J."/>
            <person name="Hernandez J.R."/>
            <person name="Houck J."/>
            <person name="Hostin D."/>
            <person name="Houston K.A."/>
            <person name="Howland T.J."/>
            <person name="Wei M.-H."/>
            <person name="Ibegwam C."/>
            <person name="Jalali M."/>
            <person name="Kalush F."/>
            <person name="Karpen G.H."/>
            <person name="Ke Z."/>
            <person name="Kennison J.A."/>
            <person name="Ketchum K.A."/>
            <person name="Kimmel B.E."/>
            <person name="Kodira C.D."/>
            <person name="Kraft C.L."/>
            <person name="Kravitz S."/>
            <person name="Kulp D."/>
            <person name="Lai Z."/>
            <person name="Lasko P."/>
            <person name="Lei Y."/>
            <person name="Levitsky A.A."/>
            <person name="Li J.H."/>
            <person name="Li Z."/>
            <person name="Liang Y."/>
            <person name="Lin X."/>
            <person name="Liu X."/>
            <person name="Mattei B."/>
            <person name="McIntosh T.C."/>
            <person name="McLeod M.P."/>
            <person name="McPherson D."/>
            <person name="Merkulov G."/>
            <person name="Milshina N.V."/>
            <person name="Mobarry C."/>
            <person name="Morris J."/>
            <person name="Moshrefi A."/>
            <person name="Mount S.M."/>
            <person name="Moy M."/>
            <person name="Murphy B."/>
            <person name="Murphy L."/>
            <person name="Muzny D.M."/>
            <person name="Nelson D.L."/>
            <person name="Nelson D.R."/>
            <person name="Nelson K.A."/>
            <person name="Nixon K."/>
            <person name="Nusskern D.R."/>
            <person name="Pacleb J.M."/>
            <person name="Palazzolo M."/>
            <person name="Pittman G.S."/>
            <person name="Pan S."/>
            <person name="Pollard J."/>
            <person name="Puri V."/>
            <person name="Reese M.G."/>
            <person name="Reinert K."/>
            <person name="Remington K."/>
            <person name="Saunders R.D.C."/>
            <person name="Scheeler F."/>
            <person name="Shen H."/>
            <person name="Shue B.C."/>
            <person name="Siden-Kiamos I."/>
            <person name="Simpson M."/>
            <person name="Skupski M.P."/>
            <person name="Smith T.J."/>
            <person name="Spier E."/>
            <person name="Spradling A.C."/>
            <person name="Stapleton M."/>
            <person name="Strong R."/>
            <person name="Sun E."/>
            <person name="Svirskas R."/>
            <person name="Tector C."/>
            <person name="Turner R."/>
            <person name="Venter E."/>
            <person name="Wang A.H."/>
            <person name="Wang X."/>
            <person name="Wang Z.-Y."/>
            <person name="Wassarman D.A."/>
            <person name="Weinstock G.M."/>
            <person name="Weissenbach J."/>
            <person name="Williams S.M."/>
            <person name="Woodage T."/>
            <person name="Worley K.C."/>
            <person name="Wu D."/>
            <person name="Yang S."/>
            <person name="Yao Q.A."/>
            <person name="Ye J."/>
            <person name="Yeh R.-F."/>
            <person name="Zaveri J.S."/>
            <person name="Zhan M."/>
            <person name="Zhang G."/>
            <person name="Zhao Q."/>
            <person name="Zheng L."/>
            <person name="Zheng X.H."/>
            <person name="Zhong F.N."/>
            <person name="Zhong W."/>
            <person name="Zhou X."/>
            <person name="Zhu S.C."/>
            <person name="Zhu X."/>
            <person name="Smith H.O."/>
            <person name="Gibbs R.A."/>
            <person name="Myers E.W."/>
            <person name="Rubin G.M."/>
            <person name="Venter J.C."/>
        </authorList>
    </citation>
    <scope>NUCLEOTIDE SEQUENCE [LARGE SCALE GENOMIC DNA]</scope>
    <source>
        <strain>Berkeley</strain>
    </source>
</reference>
<reference key="3">
    <citation type="journal article" date="2002" name="Genome Biol.">
        <title>Annotation of the Drosophila melanogaster euchromatic genome: a systematic review.</title>
        <authorList>
            <person name="Misra S."/>
            <person name="Crosby M.A."/>
            <person name="Mungall C.J."/>
            <person name="Matthews B.B."/>
            <person name="Campbell K.S."/>
            <person name="Hradecky P."/>
            <person name="Huang Y."/>
            <person name="Kaminker J.S."/>
            <person name="Millburn G.H."/>
            <person name="Prochnik S.E."/>
            <person name="Smith C.D."/>
            <person name="Tupy J.L."/>
            <person name="Whitfield E.J."/>
            <person name="Bayraktaroglu L."/>
            <person name="Berman B.P."/>
            <person name="Bettencourt B.R."/>
            <person name="Celniker S.E."/>
            <person name="de Grey A.D.N.J."/>
            <person name="Drysdale R.A."/>
            <person name="Harris N.L."/>
            <person name="Richter J."/>
            <person name="Russo S."/>
            <person name="Schroeder A.J."/>
            <person name="Shu S.Q."/>
            <person name="Stapleton M."/>
            <person name="Yamada C."/>
            <person name="Ashburner M."/>
            <person name="Gelbart W.M."/>
            <person name="Rubin G.M."/>
            <person name="Lewis S.E."/>
        </authorList>
    </citation>
    <scope>GENOME REANNOTATION</scope>
    <source>
        <strain>Berkeley</strain>
    </source>
</reference>
<reference key="4">
    <citation type="journal article" date="1997" name="Development">
        <title>bag-of-marbles and benign gonial cell neoplasm act in the germline to restrict proliferation during Drosophila spermatogenesis.</title>
        <authorList>
            <person name="Goenczy P."/>
            <person name="Matunis E."/>
            <person name="DiNardo S."/>
        </authorList>
    </citation>
    <scope>FUNCTION</scope>
    <scope>DISRUPTION PHENOTYPE</scope>
</reference>
<reference key="5">
    <citation type="journal article" date="2008" name="J. Proteome Res.">
        <title>Phosphoproteome analysis of Drosophila melanogaster embryos.</title>
        <authorList>
            <person name="Zhai B."/>
            <person name="Villen J."/>
            <person name="Beausoleil S.A."/>
            <person name="Mintseris J."/>
            <person name="Gygi S.P."/>
        </authorList>
    </citation>
    <scope>PHOSPHORYLATION [LARGE SCALE ANALYSIS] AT THR-898</scope>
    <scope>IDENTIFICATION BY MASS SPECTROMETRY</scope>
    <source>
        <tissue>Embryo</tissue>
    </source>
</reference>
<reference key="6">
    <citation type="journal article" date="2009" name="Proc. Natl. Acad. Sci. U.S.A.">
        <title>Bam and Bgcn antagonize Nanos-dependent germ-line stem cell maintenance.</title>
        <authorList>
            <person name="Li Y."/>
            <person name="Minor N.T."/>
            <person name="Park J.K."/>
            <person name="McKearin D.M."/>
            <person name="Maines J.Z."/>
        </authorList>
    </citation>
    <scope>FUNCTION</scope>
    <scope>INTERACTION WITH BAM</scope>
</reference>
<reference key="7">
    <citation type="journal article" date="2009" name="Proc. Natl. Acad. Sci. U.S.A.">
        <title>eIF4A controls germline stem cell self-renewal by directly inhibiting BAM function in the Drosophila ovary.</title>
        <authorList>
            <person name="Shen R."/>
            <person name="Weng C."/>
            <person name="Yu J."/>
            <person name="Xie T."/>
        </authorList>
    </citation>
    <scope>FUNCTION</scope>
    <scope>INTERACTION WITH BAM</scope>
</reference>
<reference key="8">
    <citation type="journal article" date="2012" name="Cell Stem Cell">
        <title>A self-limiting switch based on translational control regulates the transition from proliferation to differentiation in an adult stem cell lineage.</title>
        <authorList>
            <person name="Insco M.L."/>
            <person name="Bailey A.S."/>
            <person name="Kim J."/>
            <person name="Olivares G.H."/>
            <person name="Wapinski O.L."/>
            <person name="Tam C.H."/>
            <person name="Fuller M.T."/>
        </authorList>
    </citation>
    <scope>FUNCTION</scope>
    <scope>INTERACTION WITH BAM</scope>
</reference>
<reference key="9">
    <citation type="journal article" date="2013" name="PLoS ONE">
        <title>Mei-p26 cooperates with Bam, Bgcn and Sxl to promote early germline development in the Drosophila ovary.</title>
        <authorList>
            <person name="Li Y."/>
            <person name="Zhang Q."/>
            <person name="Carreira-Rosario A."/>
            <person name="Maines J.Z."/>
            <person name="McKearin D.M."/>
            <person name="Buszczak M."/>
        </authorList>
    </citation>
    <scope>FUNCTION</scope>
    <scope>IDENTIFICATION IN MEI-P26-BAM-BGCN-SXL COMPLEX</scope>
    <scope>INTERACTION WITH MEI-P26 AND BAM</scope>
    <scope>TISSUE SPECIFICITY</scope>
</reference>
<reference key="10">
    <citation type="journal article" date="2014" name="PLoS Genet.">
        <title>Three RNA binding proteins form a complex to promote differentiation of germline stem cell lineage in Drosophila.</title>
        <authorList>
            <person name="Chen D."/>
            <person name="Wu C."/>
            <person name="Zhao S."/>
            <person name="Geng Q."/>
            <person name="Gao Y."/>
            <person name="Li X."/>
            <person name="Zhang Y."/>
            <person name="Wang Z."/>
        </authorList>
    </citation>
    <scope>FUNCTION</scope>
    <scope>INTERACTION WITH BAM AND TUT</scope>
</reference>
<reference key="11">
    <citation type="journal article" date="2017" name="J. Genet. Genomics">
        <title>Regulators of alternative polyadenylation operate at the transition from mitosis to meiosis.</title>
        <authorList>
            <person name="Shan L."/>
            <person name="Wu C."/>
            <person name="Chen D."/>
            <person name="Hou L."/>
            <person name="Li X."/>
            <person name="Wang L."/>
            <person name="Chu X."/>
            <person name="Hou Y."/>
            <person name="Wang Z."/>
        </authorList>
    </citation>
    <scope>FUNCTION</scope>
    <scope>INTERACTION WITH BAM; TUT AND TWIN</scope>
</reference>
<reference key="12">
    <citation type="journal article" date="2020" name="Development">
        <title>WD40 protein Wuho controls germline homeostasis via TRIM-NHL tumor suppressor Mei-p26 in Drosophila.</title>
        <authorList>
            <person name="Rastegari E."/>
            <person name="Kajal K."/>
            <person name="Tan B.S."/>
            <person name="Huang F."/>
            <person name="Chen R.H."/>
            <person name="Hsieh T.S."/>
            <person name="Hsu H.J."/>
        </authorList>
    </citation>
    <scope>INTERACTION WITH WH</scope>
</reference>
<protein>
    <recommendedName>
        <fullName evidence="12">Protein benign gonial cell neoplasm</fullName>
    </recommendedName>
</protein>
<comment type="function">
    <text evidence="4 5 6 7 8 9 11">Forms a complex with tut and bam involved in 3'UTR-dependent post-transcriptional repression of several 3'-RNA processing factors, which promotes germline stem cell lineage differentiation and mitosis-to-meiosis transition (PubMed:25412508, PubMed:28190776). Part of a complex with bam involved in 3'-UTR-dependent translational repression of a subset of mRNAs, including those for mei-P26, nanos and shg/E-cadherin; may act as a promiscuous RNA-binding protein tethering bam to its target mRNAs (PubMed:19470484, PubMed:19556547, PubMed:23122292, PubMed:23526974). Required for regulating the progression of gonialblast cells through transit amplification and differentiation into gametes (PubMed:9334284).</text>
</comment>
<comment type="subunit">
    <text evidence="4 5 6 7 8 9 10">Part of a complex composed of at least mei-P26, bam, bgcn and Sxl; this complex is involved in translational repression of nanos mRNA (PubMed:23526974). Interacts with bam (via C-terminus); the interaction is direct (PubMed:19470484, PubMed:19556547, PubMed:23122292, PubMed:23526974, PubMed:25412508). Interacts with mei-P26; the interaction is direct and does not require bam (PubMed:23526974). Weakly interacts with wh/wuho; this interaction may be required for the function or formation of the mei-P26-bgcn-bam-Sxl complex (PubMed:31941704). Part of a complex composed of at least tut, bam and bgcn; complex formation does not require RNA (PubMed:25412508). Interacts with tut; the interaction is indirect and is mediated by bam (PubMed:25412508). As part of the bam-bgcn-tut complex associates with twin; may recruit the CCR4-NOT1 deadenylation complex to mRNA 3'UTRs to mediate post-transcriptional regulation of expression (PubMed:28190776).</text>
</comment>
<comment type="interaction">
    <interactant intactId="EBI-142483">
        <id>Q9W1I2</id>
    </interactant>
    <interactant intactId="EBI-88504">
        <id>P22745</id>
        <label>bam</label>
    </interactant>
    <organismsDiffer>false</organismsDiffer>
    <experiments>13</experiments>
</comment>
<comment type="tissue specificity">
    <text evidence="2 7">Expressed in testis and in 5-8 germline stem cells of ovaries, immediately adjacent to terminal filament (PubMed:10924476). Expressed in ovarian germline cells throughout the germarium (at protein level) (PubMed:23526974).</text>
</comment>
<comment type="disruption phenotype">
    <text evidence="11">Flies exhibit abnormal cysts undergoing transit amplification containing an excess number of cells that do not differentiate into gametes.</text>
</comment>
<name>BGCN_DROME</name>
<dbReference type="EMBL" id="AF255662">
    <property type="protein sequence ID" value="AAF91348.1"/>
    <property type="molecule type" value="mRNA"/>
</dbReference>
<dbReference type="EMBL" id="AE013599">
    <property type="protein sequence ID" value="AAF47077.2"/>
    <property type="molecule type" value="Genomic_DNA"/>
</dbReference>
<dbReference type="RefSeq" id="NP_523832.2">
    <property type="nucleotide sequence ID" value="NM_079108.3"/>
</dbReference>
<dbReference type="SMR" id="Q9W1I2"/>
<dbReference type="BioGRID" id="71021">
    <property type="interactions" value="14"/>
</dbReference>
<dbReference type="DIP" id="DIP-48890N"/>
<dbReference type="FunCoup" id="Q9W1I2">
    <property type="interactions" value="5"/>
</dbReference>
<dbReference type="IntAct" id="Q9W1I2">
    <property type="interactions" value="4"/>
</dbReference>
<dbReference type="STRING" id="7227.FBpp0072141"/>
<dbReference type="iPTMnet" id="Q9W1I2"/>
<dbReference type="PaxDb" id="7227-FBpp0072141"/>
<dbReference type="EnsemblMetazoa" id="FBtr0072232">
    <property type="protein sequence ID" value="FBpp0072141"/>
    <property type="gene ID" value="FBgn0004581"/>
</dbReference>
<dbReference type="GeneID" id="47873"/>
<dbReference type="KEGG" id="dme:Dmel_CG30170"/>
<dbReference type="AGR" id="FB:FBgn0004581"/>
<dbReference type="CTD" id="47873"/>
<dbReference type="FlyBase" id="FBgn0004581">
    <property type="gene designation" value="bgcn"/>
</dbReference>
<dbReference type="VEuPathDB" id="VectorBase:FBgn0004581"/>
<dbReference type="eggNOG" id="KOG0920">
    <property type="taxonomic scope" value="Eukaryota"/>
</dbReference>
<dbReference type="InParanoid" id="Q9W1I2"/>
<dbReference type="OMA" id="DIDHLWD"/>
<dbReference type="OrthoDB" id="6103986at2759"/>
<dbReference type="PhylomeDB" id="Q9W1I2"/>
<dbReference type="BioGRID-ORCS" id="47873">
    <property type="hits" value="0 hits in 1 CRISPR screen"/>
</dbReference>
<dbReference type="GenomeRNAi" id="47873"/>
<dbReference type="PRO" id="PR:Q9W1I2"/>
<dbReference type="Proteomes" id="UP000000803">
    <property type="component" value="Chromosome 2R"/>
</dbReference>
<dbReference type="Bgee" id="FBgn0004581">
    <property type="expression patterns" value="Expressed in mid-late elongation-stage spermatid (Drosophila) in testis and 13 other cell types or tissues"/>
</dbReference>
<dbReference type="ExpressionAtlas" id="Q9W1I2">
    <property type="expression patterns" value="baseline and differential"/>
</dbReference>
<dbReference type="GO" id="GO:0000900">
    <property type="term" value="F:mRNA regulatory element binding translation repressor activity"/>
    <property type="evidence" value="ECO:0000314"/>
    <property type="project" value="FlyBase"/>
</dbReference>
<dbReference type="GO" id="GO:0003723">
    <property type="term" value="F:RNA binding"/>
    <property type="evidence" value="ECO:0000318"/>
    <property type="project" value="GO_Central"/>
</dbReference>
<dbReference type="GO" id="GO:0035212">
    <property type="term" value="P:cell competition in a multicellular organism"/>
    <property type="evidence" value="ECO:0000315"/>
    <property type="project" value="FlyBase"/>
</dbReference>
<dbReference type="GO" id="GO:0007282">
    <property type="term" value="P:cystoblast division"/>
    <property type="evidence" value="ECO:0000304"/>
    <property type="project" value="FlyBase"/>
</dbReference>
<dbReference type="GO" id="GO:0030718">
    <property type="term" value="P:germ-line stem cell population maintenance"/>
    <property type="evidence" value="ECO:0000314"/>
    <property type="project" value="FlyBase"/>
</dbReference>
<dbReference type="GO" id="GO:0098730">
    <property type="term" value="P:male germline stem cell symmetric division"/>
    <property type="evidence" value="ECO:0000315"/>
    <property type="project" value="FlyBase"/>
</dbReference>
<dbReference type="GO" id="GO:0017148">
    <property type="term" value="P:negative regulation of translation"/>
    <property type="evidence" value="ECO:0000315"/>
    <property type="project" value="FlyBase"/>
</dbReference>
<dbReference type="GO" id="GO:0048477">
    <property type="term" value="P:oogenesis"/>
    <property type="evidence" value="ECO:0007001"/>
    <property type="project" value="FlyBase"/>
</dbReference>
<dbReference type="FunFam" id="1.25.40.20:FF:000561">
    <property type="entry name" value="Benign gonial cell neoplasm"/>
    <property type="match status" value="1"/>
</dbReference>
<dbReference type="Gene3D" id="1.20.120.1080">
    <property type="match status" value="1"/>
</dbReference>
<dbReference type="Gene3D" id="1.25.40.20">
    <property type="entry name" value="Ankyrin repeat-containing domain"/>
    <property type="match status" value="1"/>
</dbReference>
<dbReference type="Gene3D" id="3.40.50.300">
    <property type="entry name" value="P-loop containing nucleotide triphosphate hydrolases"/>
    <property type="match status" value="2"/>
</dbReference>
<dbReference type="InterPro" id="IPR002110">
    <property type="entry name" value="Ankyrin_rpt"/>
</dbReference>
<dbReference type="InterPro" id="IPR036770">
    <property type="entry name" value="Ankyrin_rpt-contain_sf"/>
</dbReference>
<dbReference type="InterPro" id="IPR011709">
    <property type="entry name" value="DEAD-box_helicase_OB_fold"/>
</dbReference>
<dbReference type="InterPro" id="IPR007502">
    <property type="entry name" value="Helicase-assoc_dom"/>
</dbReference>
<dbReference type="InterPro" id="IPR027417">
    <property type="entry name" value="P-loop_NTPase"/>
</dbReference>
<dbReference type="PANTHER" id="PTHR18934:SF213">
    <property type="entry name" value="3'-5' RNA HELICASE YTHDC2"/>
    <property type="match status" value="1"/>
</dbReference>
<dbReference type="PANTHER" id="PTHR18934">
    <property type="entry name" value="ATP-DEPENDENT RNA HELICASE"/>
    <property type="match status" value="1"/>
</dbReference>
<dbReference type="Pfam" id="PF21010">
    <property type="entry name" value="HA2_C"/>
    <property type="match status" value="1"/>
</dbReference>
<dbReference type="Pfam" id="PF07717">
    <property type="entry name" value="OB_NTP_bind"/>
    <property type="match status" value="1"/>
</dbReference>
<dbReference type="SMART" id="SM00847">
    <property type="entry name" value="HA2"/>
    <property type="match status" value="1"/>
</dbReference>
<dbReference type="SUPFAM" id="SSF48403">
    <property type="entry name" value="Ankyrin repeat"/>
    <property type="match status" value="1"/>
</dbReference>
<dbReference type="SUPFAM" id="SSF52540">
    <property type="entry name" value="P-loop containing nucleoside triphosphate hydrolases"/>
    <property type="match status" value="2"/>
</dbReference>
<dbReference type="PROSITE" id="PS50297">
    <property type="entry name" value="ANK_REP_REGION"/>
    <property type="match status" value="1"/>
</dbReference>
<dbReference type="PROSITE" id="PS50088">
    <property type="entry name" value="ANK_REPEAT"/>
    <property type="match status" value="1"/>
</dbReference>
<keyword id="KW-0040">ANK repeat</keyword>
<keyword id="KW-0217">Developmental protein</keyword>
<keyword id="KW-0221">Differentiation</keyword>
<keyword id="KW-0896">Oogenesis</keyword>
<keyword id="KW-0597">Phosphoprotein</keyword>
<keyword id="KW-1185">Reference proteome</keyword>
<keyword id="KW-0744">Spermatogenesis</keyword>
<sequence length="1215" mass="139279">MNHIIQDKYIPQQLLYFLAGRRCCQQFPCTFRTSEHEAFANNARSLGLRSQVVHVNGNSCVKVYKQACRHYLEEPKTLVLSSGATLNMFTLLSRKSLMGKEDLELYADLVSMKANASDLPSLHLPLPAIRPPNLRFWTEAQLNFLTAFLGHSLSDEILQSLYASRVIVYNAALCWDKSVFLPLVILDDCRNKKSNVKIMCIERQAILATYNSQRTANFFGEQLGETVGIQLPYFSAVSSSTFIIYSTAQYFLRSLTSQQFRNISHLVVNDVHLHDPYTDILLSEIRMALSSHQNLRVVLLSQMGNPKKFTDFFGEGLQLNMIKQPEVAPRVSYLNELHSCIALAGIHKGPDIYKEIPEAFRANNPRNEQMDKCLQAYGELGTDAALRPFLYAVNYDLAPVNYRHSLTGKTAVHFASELNKANHLRLLLFMGADPYIVDLFQQNAISLAAMNGNHECIDVLNSYSLHGYVVKSAKPDFVDYDLIIDIMYLLRTKPEYSPGEYSPGNILIILPTYYHIVKLNYMILSHCLTGSLQECSIFLLYDNMRNDYLQALVNASDETVKVVLATDIIESLCLKVPFKYQIDTACRLNNVYDTTSCSGDDRFEWVAKDALLRRELILQPNKGDVQCFRLISKEAYEELSETSQPSLQTMQLDKICLAVKLLSPNTIISEYLGITISPPPLINVHHAVQFLKKIDVLDDAEDVTWLGCRLMDIPVSCQLGRMLIFGILLRCLDPILTIVSSLSTADPLGIPFTEDIDNLWDRFTIYIQNSIKKERTYLSDNQFSDHFIFVRLYKEWQNRMHNRTPPLYLKDEYEFMLNGLMEQLTSIRSEIVSSLRAANLIHSRGKLSMNNLNQMSCNWHMVKAALTGGMYPNIYAVDTRKSSLKSAFSGNVSMHPNTVLRDFLEPLNISAQSFRTPWIVCNRQKSHIVYATLVVPLAVAMFSGHPRIRLSPICDSEMSLTDRNVNVFIDEWIWMVMSKATAEMVMRTRYYFFKMYHDLLKHCSELDMWRRDCEPVSQYTVLTDTLSKIFESEDGFVGFFKPPPITFLPTPQLPSLYLLSVNAHFSWAREVEENMLSKPHHFNSHFIERQFFVLYAGGDCEEFHSRNTPAFIESVLGKFVRPIDTPNRHIFVILYRKDPDMMLSISRAKFVNGVFMLQEYFRNNIPVFEILDACVSLNVQTPVFDGRLMSALIDKRVGNLIMELFAFRHHWIHKR</sequence>
<feature type="chain" id="PRO_0000067054" description="Protein benign gonial cell neoplasm">
    <location>
        <begin position="1"/>
        <end position="1215"/>
    </location>
</feature>
<feature type="repeat" description="ANK" evidence="1">
    <location>
        <begin position="407"/>
        <end position="439"/>
    </location>
</feature>
<feature type="modified residue" description="Phosphothreonine" evidence="3">
    <location>
        <position position="898"/>
    </location>
</feature>
<proteinExistence type="evidence at protein level"/>
<accession>Q9W1I2</accession>
<accession>Q9W1I3</accession>
<evidence type="ECO:0000255" key="1">
    <source>
        <dbReference type="PROSITE-ProRule" id="PRU00023"/>
    </source>
</evidence>
<evidence type="ECO:0000269" key="2">
    <source>
    </source>
</evidence>
<evidence type="ECO:0000269" key="3">
    <source>
    </source>
</evidence>
<evidence type="ECO:0000269" key="4">
    <source>
    </source>
</evidence>
<evidence type="ECO:0000269" key="5">
    <source>
    </source>
</evidence>
<evidence type="ECO:0000269" key="6">
    <source>
    </source>
</evidence>
<evidence type="ECO:0000269" key="7">
    <source>
    </source>
</evidence>
<evidence type="ECO:0000269" key="8">
    <source>
    </source>
</evidence>
<evidence type="ECO:0000269" key="9">
    <source>
    </source>
</evidence>
<evidence type="ECO:0000269" key="10">
    <source>
    </source>
</evidence>
<evidence type="ECO:0000269" key="11">
    <source>
    </source>
</evidence>
<evidence type="ECO:0000312" key="12">
    <source>
        <dbReference type="FlyBase" id="FBgn0004581"/>
    </source>
</evidence>
<evidence type="ECO:0000312" key="13">
    <source>
        <dbReference type="Proteomes" id="UP000000803"/>
    </source>
</evidence>
<gene>
    <name evidence="12" type="primary">bgcn</name>
    <name evidence="12" type="synonym">b(2)gcn</name>
    <name evidence="12" type="ORF">CG30170</name>
</gene>